<name>ATPB_TROAR</name>
<proteinExistence type="inferred from homology"/>
<sequence>MRINPTISGPGVSTLEEKNLGRVAQIIGPVLDVAFPPGKMPNIYNALVVKGRDTVGQQINVTCEVQQLLGNNRVRAVAMSATDGLTRGLEVIDTGAPLSVPVGGATLGRIFNVLGEPVDNLGPVDTRTTSPIHRSAPAFIQLDTKLSIFETGIKVVDLLAPYRRGGKIGLFGGAGVGKTVLIMELINNIAKAHGGVSVFGGVGERTREGNDLYMEMKESGVINEQNIAESKVALVYGQMNEPPGARMRVGLTALTMAEYFRDVNEQDVLLFIDNIFRFVQAGSEVSALLGRMPSAVGYQPTLSTEMGSLQERITSTKEGSITSIQAVYVPADDLTDPAPATTFAHLDATTVLSRGLAAKGIYPAVDPLDSTSTMLQPRIVGEEHYETAQRVKQTLQRYKELQDIIAILGLDELSEEDRLTVARARKIERFLSQPFFVAEVFTGSPGKYVGLAETIRGFQLILSGELDGLPEQAFYLVGNIDEATAKAMNLEVESKLKK</sequence>
<geneLocation type="chloroplast"/>
<organism>
    <name type="scientific">Trochodendron aralioides</name>
    <name type="common">Wheel tree</name>
    <dbReference type="NCBI Taxonomy" id="4407"/>
    <lineage>
        <taxon>Eukaryota</taxon>
        <taxon>Viridiplantae</taxon>
        <taxon>Streptophyta</taxon>
        <taxon>Embryophyta</taxon>
        <taxon>Tracheophyta</taxon>
        <taxon>Spermatophyta</taxon>
        <taxon>Magnoliopsida</taxon>
        <taxon>Trochodendrales</taxon>
        <taxon>Trochodendraceae</taxon>
        <taxon>Trochodendron</taxon>
    </lineage>
</organism>
<dbReference type="EC" id="7.1.2.2" evidence="1"/>
<dbReference type="EMBL" id="AF093423">
    <property type="protein sequence ID" value="AAD38084.1"/>
    <property type="molecule type" value="Genomic_DNA"/>
</dbReference>
<dbReference type="RefSeq" id="YP_008081464.1">
    <property type="nucleotide sequence ID" value="NC_021426.1"/>
</dbReference>
<dbReference type="SMR" id="Q9XQX2"/>
<dbReference type="GeneID" id="15823071"/>
<dbReference type="GO" id="GO:0009535">
    <property type="term" value="C:chloroplast thylakoid membrane"/>
    <property type="evidence" value="ECO:0007669"/>
    <property type="project" value="UniProtKB-SubCell"/>
</dbReference>
<dbReference type="GO" id="GO:0005739">
    <property type="term" value="C:mitochondrion"/>
    <property type="evidence" value="ECO:0007669"/>
    <property type="project" value="GOC"/>
</dbReference>
<dbReference type="GO" id="GO:0045259">
    <property type="term" value="C:proton-transporting ATP synthase complex"/>
    <property type="evidence" value="ECO:0007669"/>
    <property type="project" value="UniProtKB-KW"/>
</dbReference>
<dbReference type="GO" id="GO:0005524">
    <property type="term" value="F:ATP binding"/>
    <property type="evidence" value="ECO:0007669"/>
    <property type="project" value="UniProtKB-UniRule"/>
</dbReference>
<dbReference type="GO" id="GO:0016887">
    <property type="term" value="F:ATP hydrolysis activity"/>
    <property type="evidence" value="ECO:0007669"/>
    <property type="project" value="InterPro"/>
</dbReference>
<dbReference type="GO" id="GO:0046933">
    <property type="term" value="F:proton-transporting ATP synthase activity, rotational mechanism"/>
    <property type="evidence" value="ECO:0007669"/>
    <property type="project" value="UniProtKB-UniRule"/>
</dbReference>
<dbReference type="GO" id="GO:0042776">
    <property type="term" value="P:proton motive force-driven mitochondrial ATP synthesis"/>
    <property type="evidence" value="ECO:0007669"/>
    <property type="project" value="TreeGrafter"/>
</dbReference>
<dbReference type="CDD" id="cd18110">
    <property type="entry name" value="ATP-synt_F1_beta_C"/>
    <property type="match status" value="1"/>
</dbReference>
<dbReference type="CDD" id="cd18115">
    <property type="entry name" value="ATP-synt_F1_beta_N"/>
    <property type="match status" value="1"/>
</dbReference>
<dbReference type="CDD" id="cd01133">
    <property type="entry name" value="F1-ATPase_beta_CD"/>
    <property type="match status" value="1"/>
</dbReference>
<dbReference type="FunFam" id="1.10.1140.10:FF:000001">
    <property type="entry name" value="ATP synthase subunit beta"/>
    <property type="match status" value="1"/>
</dbReference>
<dbReference type="FunFam" id="3.40.50.12240:FF:000006">
    <property type="entry name" value="ATP synthase subunit beta"/>
    <property type="match status" value="1"/>
</dbReference>
<dbReference type="FunFam" id="3.40.50.300:FF:000004">
    <property type="entry name" value="ATP synthase subunit beta"/>
    <property type="match status" value="1"/>
</dbReference>
<dbReference type="FunFam" id="2.40.10.170:FF:000002">
    <property type="entry name" value="ATP synthase subunit beta, chloroplastic"/>
    <property type="match status" value="1"/>
</dbReference>
<dbReference type="Gene3D" id="2.40.10.170">
    <property type="match status" value="1"/>
</dbReference>
<dbReference type="Gene3D" id="1.10.1140.10">
    <property type="entry name" value="Bovine Mitochondrial F1-atpase, Atp Synthase Beta Chain, Chain D, domain 3"/>
    <property type="match status" value="1"/>
</dbReference>
<dbReference type="Gene3D" id="3.40.50.300">
    <property type="entry name" value="P-loop containing nucleotide triphosphate hydrolases"/>
    <property type="match status" value="1"/>
</dbReference>
<dbReference type="HAMAP" id="MF_01347">
    <property type="entry name" value="ATP_synth_beta_bact"/>
    <property type="match status" value="1"/>
</dbReference>
<dbReference type="InterPro" id="IPR003593">
    <property type="entry name" value="AAA+_ATPase"/>
</dbReference>
<dbReference type="InterPro" id="IPR055190">
    <property type="entry name" value="ATP-synt_VA_C"/>
</dbReference>
<dbReference type="InterPro" id="IPR005722">
    <property type="entry name" value="ATP_synth_F1_bsu"/>
</dbReference>
<dbReference type="InterPro" id="IPR020003">
    <property type="entry name" value="ATPase_a/bsu_AS"/>
</dbReference>
<dbReference type="InterPro" id="IPR050053">
    <property type="entry name" value="ATPase_alpha/beta_chains"/>
</dbReference>
<dbReference type="InterPro" id="IPR004100">
    <property type="entry name" value="ATPase_F1/V1/A1_a/bsu_N"/>
</dbReference>
<dbReference type="InterPro" id="IPR036121">
    <property type="entry name" value="ATPase_F1/V1/A1_a/bsu_N_sf"/>
</dbReference>
<dbReference type="InterPro" id="IPR000194">
    <property type="entry name" value="ATPase_F1/V1/A1_a/bsu_nucl-bd"/>
</dbReference>
<dbReference type="InterPro" id="IPR024034">
    <property type="entry name" value="ATPase_F1/V1_b/a_C"/>
</dbReference>
<dbReference type="InterPro" id="IPR027417">
    <property type="entry name" value="P-loop_NTPase"/>
</dbReference>
<dbReference type="NCBIfam" id="TIGR01039">
    <property type="entry name" value="atpD"/>
    <property type="match status" value="1"/>
</dbReference>
<dbReference type="PANTHER" id="PTHR15184">
    <property type="entry name" value="ATP SYNTHASE"/>
    <property type="match status" value="1"/>
</dbReference>
<dbReference type="PANTHER" id="PTHR15184:SF71">
    <property type="entry name" value="ATP SYNTHASE SUBUNIT BETA, MITOCHONDRIAL"/>
    <property type="match status" value="1"/>
</dbReference>
<dbReference type="Pfam" id="PF00006">
    <property type="entry name" value="ATP-synt_ab"/>
    <property type="match status" value="1"/>
</dbReference>
<dbReference type="Pfam" id="PF02874">
    <property type="entry name" value="ATP-synt_ab_N"/>
    <property type="match status" value="1"/>
</dbReference>
<dbReference type="Pfam" id="PF22919">
    <property type="entry name" value="ATP-synt_VA_C"/>
    <property type="match status" value="1"/>
</dbReference>
<dbReference type="SMART" id="SM00382">
    <property type="entry name" value="AAA"/>
    <property type="match status" value="1"/>
</dbReference>
<dbReference type="SUPFAM" id="SSF47917">
    <property type="entry name" value="C-terminal domain of alpha and beta subunits of F1 ATP synthase"/>
    <property type="match status" value="1"/>
</dbReference>
<dbReference type="SUPFAM" id="SSF50615">
    <property type="entry name" value="N-terminal domain of alpha and beta subunits of F1 ATP synthase"/>
    <property type="match status" value="1"/>
</dbReference>
<dbReference type="SUPFAM" id="SSF52540">
    <property type="entry name" value="P-loop containing nucleoside triphosphate hydrolases"/>
    <property type="match status" value="1"/>
</dbReference>
<dbReference type="PROSITE" id="PS00152">
    <property type="entry name" value="ATPASE_ALPHA_BETA"/>
    <property type="match status" value="1"/>
</dbReference>
<comment type="function">
    <text evidence="1">Produces ATP from ADP in the presence of a proton gradient across the membrane. The catalytic sites are hosted primarily by the beta subunits.</text>
</comment>
<comment type="catalytic activity">
    <reaction evidence="1">
        <text>ATP + H2O + 4 H(+)(in) = ADP + phosphate + 5 H(+)(out)</text>
        <dbReference type="Rhea" id="RHEA:57720"/>
        <dbReference type="ChEBI" id="CHEBI:15377"/>
        <dbReference type="ChEBI" id="CHEBI:15378"/>
        <dbReference type="ChEBI" id="CHEBI:30616"/>
        <dbReference type="ChEBI" id="CHEBI:43474"/>
        <dbReference type="ChEBI" id="CHEBI:456216"/>
        <dbReference type="EC" id="7.1.2.2"/>
    </reaction>
</comment>
<comment type="subunit">
    <text evidence="1">F-type ATPases have 2 components, CF(1) - the catalytic core - and CF(0) - the membrane proton channel. CF(1) has five subunits: alpha(3), beta(3), gamma(1), delta(1), epsilon(1). CF(0) has four main subunits: a(1), b(1), b'(1) and c(9-12).</text>
</comment>
<comment type="subcellular location">
    <subcellularLocation>
        <location evidence="1">Plastid</location>
        <location evidence="1">Chloroplast thylakoid membrane</location>
        <topology evidence="1">Peripheral membrane protein</topology>
    </subcellularLocation>
</comment>
<comment type="similarity">
    <text evidence="1">Belongs to the ATPase alpha/beta chains family.</text>
</comment>
<feature type="chain" id="PRO_0000254530" description="ATP synthase subunit beta, chloroplastic">
    <location>
        <begin position="1"/>
        <end position="498"/>
    </location>
</feature>
<feature type="binding site" evidence="1">
    <location>
        <begin position="172"/>
        <end position="179"/>
    </location>
    <ligand>
        <name>ATP</name>
        <dbReference type="ChEBI" id="CHEBI:30616"/>
    </ligand>
</feature>
<keyword id="KW-0066">ATP synthesis</keyword>
<keyword id="KW-0067">ATP-binding</keyword>
<keyword id="KW-0139">CF(1)</keyword>
<keyword id="KW-0150">Chloroplast</keyword>
<keyword id="KW-0375">Hydrogen ion transport</keyword>
<keyword id="KW-0406">Ion transport</keyword>
<keyword id="KW-0472">Membrane</keyword>
<keyword id="KW-0547">Nucleotide-binding</keyword>
<keyword id="KW-0934">Plastid</keyword>
<keyword id="KW-0793">Thylakoid</keyword>
<keyword id="KW-1278">Translocase</keyword>
<keyword id="KW-0813">Transport</keyword>
<accession>Q9XQX2</accession>
<reference key="1">
    <citation type="journal article" date="1999" name="Ann. Mo. Bot. Gard.">
        <title>Phylogeny of basal eudicots based on three molecular data sets: atpB, rbcL, and 18S nuclear ribosomal DNA sequences.</title>
        <authorList>
            <person name="Hoot S.B."/>
            <person name="Magallon S."/>
            <person name="Crane P.R."/>
        </authorList>
    </citation>
    <scope>NUCLEOTIDE SEQUENCE [GENOMIC DNA]</scope>
</reference>
<protein>
    <recommendedName>
        <fullName evidence="1">ATP synthase subunit beta, chloroplastic</fullName>
        <ecNumber evidence="1">7.1.2.2</ecNumber>
    </recommendedName>
    <alternativeName>
        <fullName evidence="1">ATP synthase F1 sector subunit beta</fullName>
    </alternativeName>
    <alternativeName>
        <fullName evidence="1">F-ATPase subunit beta</fullName>
    </alternativeName>
</protein>
<gene>
    <name evidence="1" type="primary">atpB</name>
</gene>
<evidence type="ECO:0000255" key="1">
    <source>
        <dbReference type="HAMAP-Rule" id="MF_01347"/>
    </source>
</evidence>